<dbReference type="EMBL" id="AM946015">
    <property type="protein sequence ID" value="CAR40484.1"/>
    <property type="molecule type" value="Genomic_DNA"/>
</dbReference>
<dbReference type="RefSeq" id="WP_001118387.1">
    <property type="nucleotide sequence ID" value="NC_012004.1"/>
</dbReference>
<dbReference type="SMR" id="B9DSX5"/>
<dbReference type="STRING" id="218495.SUB0093"/>
<dbReference type="GeneID" id="93825319"/>
<dbReference type="KEGG" id="sub:SUB0093"/>
<dbReference type="eggNOG" id="COG0100">
    <property type="taxonomic scope" value="Bacteria"/>
</dbReference>
<dbReference type="HOGENOM" id="CLU_072439_5_0_9"/>
<dbReference type="OrthoDB" id="9806415at2"/>
<dbReference type="Proteomes" id="UP000000449">
    <property type="component" value="Chromosome"/>
</dbReference>
<dbReference type="GO" id="GO:1990904">
    <property type="term" value="C:ribonucleoprotein complex"/>
    <property type="evidence" value="ECO:0007669"/>
    <property type="project" value="UniProtKB-KW"/>
</dbReference>
<dbReference type="GO" id="GO:0005840">
    <property type="term" value="C:ribosome"/>
    <property type="evidence" value="ECO:0007669"/>
    <property type="project" value="UniProtKB-KW"/>
</dbReference>
<dbReference type="GO" id="GO:0019843">
    <property type="term" value="F:rRNA binding"/>
    <property type="evidence" value="ECO:0007669"/>
    <property type="project" value="UniProtKB-UniRule"/>
</dbReference>
<dbReference type="GO" id="GO:0003735">
    <property type="term" value="F:structural constituent of ribosome"/>
    <property type="evidence" value="ECO:0007669"/>
    <property type="project" value="InterPro"/>
</dbReference>
<dbReference type="GO" id="GO:0006412">
    <property type="term" value="P:translation"/>
    <property type="evidence" value="ECO:0007669"/>
    <property type="project" value="UniProtKB-UniRule"/>
</dbReference>
<dbReference type="FunFam" id="3.30.420.80:FF:000001">
    <property type="entry name" value="30S ribosomal protein S11"/>
    <property type="match status" value="1"/>
</dbReference>
<dbReference type="Gene3D" id="3.30.420.80">
    <property type="entry name" value="Ribosomal protein S11"/>
    <property type="match status" value="1"/>
</dbReference>
<dbReference type="HAMAP" id="MF_01310">
    <property type="entry name" value="Ribosomal_uS11"/>
    <property type="match status" value="1"/>
</dbReference>
<dbReference type="InterPro" id="IPR001971">
    <property type="entry name" value="Ribosomal_uS11"/>
</dbReference>
<dbReference type="InterPro" id="IPR019981">
    <property type="entry name" value="Ribosomal_uS11_bac-type"/>
</dbReference>
<dbReference type="InterPro" id="IPR018102">
    <property type="entry name" value="Ribosomal_uS11_CS"/>
</dbReference>
<dbReference type="InterPro" id="IPR036967">
    <property type="entry name" value="Ribosomal_uS11_sf"/>
</dbReference>
<dbReference type="NCBIfam" id="NF003698">
    <property type="entry name" value="PRK05309.1"/>
    <property type="match status" value="1"/>
</dbReference>
<dbReference type="NCBIfam" id="TIGR03632">
    <property type="entry name" value="uS11_bact"/>
    <property type="match status" value="1"/>
</dbReference>
<dbReference type="PANTHER" id="PTHR11759">
    <property type="entry name" value="40S RIBOSOMAL PROTEIN S14/30S RIBOSOMAL PROTEIN S11"/>
    <property type="match status" value="1"/>
</dbReference>
<dbReference type="Pfam" id="PF00411">
    <property type="entry name" value="Ribosomal_S11"/>
    <property type="match status" value="1"/>
</dbReference>
<dbReference type="PIRSF" id="PIRSF002131">
    <property type="entry name" value="Ribosomal_S11"/>
    <property type="match status" value="1"/>
</dbReference>
<dbReference type="SUPFAM" id="SSF53137">
    <property type="entry name" value="Translational machinery components"/>
    <property type="match status" value="1"/>
</dbReference>
<dbReference type="PROSITE" id="PS00054">
    <property type="entry name" value="RIBOSOMAL_S11"/>
    <property type="match status" value="1"/>
</dbReference>
<gene>
    <name evidence="1" type="primary">rpsK</name>
    <name type="ordered locus">SUB0093</name>
</gene>
<keyword id="KW-1185">Reference proteome</keyword>
<keyword id="KW-0687">Ribonucleoprotein</keyword>
<keyword id="KW-0689">Ribosomal protein</keyword>
<keyword id="KW-0694">RNA-binding</keyword>
<keyword id="KW-0699">rRNA-binding</keyword>
<proteinExistence type="inferred from homology"/>
<protein>
    <recommendedName>
        <fullName evidence="1">Small ribosomal subunit protein uS11</fullName>
    </recommendedName>
    <alternativeName>
        <fullName evidence="2">30S ribosomal protein S11</fullName>
    </alternativeName>
</protein>
<reference key="1">
    <citation type="journal article" date="2009" name="BMC Genomics">
        <title>Evidence for niche adaptation in the genome of the bovine pathogen Streptococcus uberis.</title>
        <authorList>
            <person name="Ward P.N."/>
            <person name="Holden M.T.G."/>
            <person name="Leigh J.A."/>
            <person name="Lennard N."/>
            <person name="Bignell A."/>
            <person name="Barron A."/>
            <person name="Clark L."/>
            <person name="Quail M.A."/>
            <person name="Woodward J."/>
            <person name="Barrell B.G."/>
            <person name="Egan S.A."/>
            <person name="Field T.R."/>
            <person name="Maskell D."/>
            <person name="Kehoe M."/>
            <person name="Dowson C.G."/>
            <person name="Chanter N."/>
            <person name="Whatmore A.M."/>
            <person name="Bentley S.D."/>
            <person name="Parkhill J."/>
        </authorList>
    </citation>
    <scope>NUCLEOTIDE SEQUENCE [LARGE SCALE GENOMIC DNA]</scope>
    <source>
        <strain>ATCC BAA-854 / 0140J</strain>
    </source>
</reference>
<name>RS11_STRU0</name>
<organism>
    <name type="scientific">Streptococcus uberis (strain ATCC BAA-854 / 0140J)</name>
    <dbReference type="NCBI Taxonomy" id="218495"/>
    <lineage>
        <taxon>Bacteria</taxon>
        <taxon>Bacillati</taxon>
        <taxon>Bacillota</taxon>
        <taxon>Bacilli</taxon>
        <taxon>Lactobacillales</taxon>
        <taxon>Streptococcaceae</taxon>
        <taxon>Streptococcus</taxon>
    </lineage>
</organism>
<accession>B9DSX5</accession>
<evidence type="ECO:0000255" key="1">
    <source>
        <dbReference type="HAMAP-Rule" id="MF_01310"/>
    </source>
</evidence>
<evidence type="ECO:0000305" key="2"/>
<sequence length="127" mass="13369">MAKPTRKRRVKKNIESGVAHIHATFNNTIVMITDVHGNALAWSSAGALGFKGSRKSTPFAAQMAAEAAAKSAQEHGLKTVEVTVKGPGSGRESAIRALAAAGLEVTAIRDVTPVPHNGARPPKRRRV</sequence>
<comment type="function">
    <text evidence="1">Located on the platform of the 30S subunit, it bridges several disparate RNA helices of the 16S rRNA. Forms part of the Shine-Dalgarno cleft in the 70S ribosome.</text>
</comment>
<comment type="subunit">
    <text evidence="1">Part of the 30S ribosomal subunit. Interacts with proteins S7 and S18. Binds to IF-3.</text>
</comment>
<comment type="similarity">
    <text evidence="1">Belongs to the universal ribosomal protein uS11 family.</text>
</comment>
<feature type="chain" id="PRO_1000165571" description="Small ribosomal subunit protein uS11">
    <location>
        <begin position="1"/>
        <end position="127"/>
    </location>
</feature>